<protein>
    <recommendedName>
        <fullName evidence="2">Large ribosomal subunit protein eL21</fullName>
    </recommendedName>
    <alternativeName>
        <fullName>50S ribosomal protein L21e</fullName>
    </alternativeName>
</protein>
<evidence type="ECO:0000256" key="1">
    <source>
        <dbReference type="SAM" id="MobiDB-lite"/>
    </source>
</evidence>
<evidence type="ECO:0000305" key="2"/>
<feature type="chain" id="PRO_0000149699" description="Large ribosomal subunit protein eL21">
    <location>
        <begin position="1"/>
        <end position="97"/>
    </location>
</feature>
<feature type="region of interest" description="Disordered" evidence="1">
    <location>
        <begin position="1"/>
        <end position="25"/>
    </location>
</feature>
<feature type="compositionally biased region" description="Basic residues" evidence="1">
    <location>
        <begin position="1"/>
        <end position="24"/>
    </location>
</feature>
<comment type="similarity">
    <text evidence="2">Belongs to the eukaryotic ribosomal protein eL21 family.</text>
</comment>
<dbReference type="EMBL" id="BA000001">
    <property type="protein sequence ID" value="BAA30227.1"/>
    <property type="molecule type" value="Genomic_DNA"/>
</dbReference>
<dbReference type="PIR" id="A71054">
    <property type="entry name" value="A71054"/>
</dbReference>
<dbReference type="RefSeq" id="WP_048053313.1">
    <property type="nucleotide sequence ID" value="NC_000961.1"/>
</dbReference>
<dbReference type="SMR" id="O74001"/>
<dbReference type="STRING" id="70601.gene:9378087"/>
<dbReference type="EnsemblBacteria" id="BAA30227">
    <property type="protein sequence ID" value="BAA30227"/>
    <property type="gene ID" value="BAA30227"/>
</dbReference>
<dbReference type="GeneID" id="1443446"/>
<dbReference type="KEGG" id="pho:PHS032"/>
<dbReference type="eggNOG" id="arCOG04129">
    <property type="taxonomic scope" value="Archaea"/>
</dbReference>
<dbReference type="OrthoDB" id="6295at2157"/>
<dbReference type="Proteomes" id="UP000000752">
    <property type="component" value="Chromosome"/>
</dbReference>
<dbReference type="GO" id="GO:1990904">
    <property type="term" value="C:ribonucleoprotein complex"/>
    <property type="evidence" value="ECO:0007669"/>
    <property type="project" value="UniProtKB-KW"/>
</dbReference>
<dbReference type="GO" id="GO:0005840">
    <property type="term" value="C:ribosome"/>
    <property type="evidence" value="ECO:0007669"/>
    <property type="project" value="UniProtKB-KW"/>
</dbReference>
<dbReference type="GO" id="GO:0003735">
    <property type="term" value="F:structural constituent of ribosome"/>
    <property type="evidence" value="ECO:0007669"/>
    <property type="project" value="InterPro"/>
</dbReference>
<dbReference type="GO" id="GO:0006412">
    <property type="term" value="P:translation"/>
    <property type="evidence" value="ECO:0007669"/>
    <property type="project" value="UniProtKB-UniRule"/>
</dbReference>
<dbReference type="FunFam" id="2.30.30.70:FF:000001">
    <property type="entry name" value="60S ribosomal protein L21"/>
    <property type="match status" value="1"/>
</dbReference>
<dbReference type="Gene3D" id="2.30.30.70">
    <property type="entry name" value="Ribosomal protein L21"/>
    <property type="match status" value="1"/>
</dbReference>
<dbReference type="HAMAP" id="MF_00369">
    <property type="entry name" value="Ribosomal_eL21"/>
    <property type="match status" value="1"/>
</dbReference>
<dbReference type="InterPro" id="IPR001147">
    <property type="entry name" value="Ribosomal_eL21"/>
</dbReference>
<dbReference type="InterPro" id="IPR022856">
    <property type="entry name" value="Ribosomal_eL21_arc"/>
</dbReference>
<dbReference type="InterPro" id="IPR018259">
    <property type="entry name" value="Ribosomal_eL21_CS"/>
</dbReference>
<dbReference type="InterPro" id="IPR036948">
    <property type="entry name" value="Ribosomal_eL21_sf"/>
</dbReference>
<dbReference type="InterPro" id="IPR008991">
    <property type="entry name" value="Translation_prot_SH3-like_sf"/>
</dbReference>
<dbReference type="NCBIfam" id="NF003303">
    <property type="entry name" value="PRK04306.1"/>
    <property type="match status" value="1"/>
</dbReference>
<dbReference type="PANTHER" id="PTHR20981">
    <property type="entry name" value="60S RIBOSOMAL PROTEIN L21"/>
    <property type="match status" value="1"/>
</dbReference>
<dbReference type="Pfam" id="PF01157">
    <property type="entry name" value="Ribosomal_L21e"/>
    <property type="match status" value="1"/>
</dbReference>
<dbReference type="SUPFAM" id="SSF50104">
    <property type="entry name" value="Translation proteins SH3-like domain"/>
    <property type="match status" value="1"/>
</dbReference>
<dbReference type="PROSITE" id="PS01171">
    <property type="entry name" value="RIBOSOMAL_L21E"/>
    <property type="match status" value="1"/>
</dbReference>
<sequence length="97" mass="11376">MVQKPHSFRRKTRKKLRKHPRRRGLPPLTRFLQEFEVGQKVHIVIEPSYHKGMPDPRFHGRTGTVVGKRGDAYIVEVPDGNKVKTLFIHPVHLRPQK</sequence>
<reference key="1">
    <citation type="journal article" date="1998" name="DNA Res.">
        <title>Complete sequence and gene organization of the genome of a hyper-thermophilic archaebacterium, Pyrococcus horikoshii OT3.</title>
        <authorList>
            <person name="Kawarabayasi Y."/>
            <person name="Sawada M."/>
            <person name="Horikawa H."/>
            <person name="Haikawa Y."/>
            <person name="Hino Y."/>
            <person name="Yamamoto S."/>
            <person name="Sekine M."/>
            <person name="Baba S."/>
            <person name="Kosugi H."/>
            <person name="Hosoyama A."/>
            <person name="Nagai Y."/>
            <person name="Sakai M."/>
            <person name="Ogura K."/>
            <person name="Otsuka R."/>
            <person name="Nakazawa H."/>
            <person name="Takamiya M."/>
            <person name="Ohfuku Y."/>
            <person name="Funahashi T."/>
            <person name="Tanaka T."/>
            <person name="Kudoh Y."/>
            <person name="Yamazaki J."/>
            <person name="Kushida N."/>
            <person name="Oguchi A."/>
            <person name="Aoki K."/>
            <person name="Yoshizawa T."/>
            <person name="Nakamura Y."/>
            <person name="Robb F.T."/>
            <person name="Horikoshi K."/>
            <person name="Masuchi Y."/>
            <person name="Shizuya H."/>
            <person name="Kikuchi H."/>
        </authorList>
    </citation>
    <scope>NUCLEOTIDE SEQUENCE [LARGE SCALE GENOMIC DNA]</scope>
    <source>
        <strain>ATCC 700860 / DSM 12428 / JCM 9974 / NBRC 100139 / OT-3</strain>
    </source>
</reference>
<proteinExistence type="inferred from homology"/>
<accession>O74001</accession>
<keyword id="KW-0687">Ribonucleoprotein</keyword>
<keyword id="KW-0689">Ribosomal protein</keyword>
<organism>
    <name type="scientific">Pyrococcus horikoshii (strain ATCC 700860 / DSM 12428 / JCM 9974 / NBRC 100139 / OT-3)</name>
    <dbReference type="NCBI Taxonomy" id="70601"/>
    <lineage>
        <taxon>Archaea</taxon>
        <taxon>Methanobacteriati</taxon>
        <taxon>Methanobacteriota</taxon>
        <taxon>Thermococci</taxon>
        <taxon>Thermococcales</taxon>
        <taxon>Thermococcaceae</taxon>
        <taxon>Pyrococcus</taxon>
    </lineage>
</organism>
<name>RL21_PYRHO</name>
<gene>
    <name type="primary">rpl21e</name>
    <name type="ordered locus">PH1127.1</name>
    <name type="ORF">PHS032</name>
</gene>